<comment type="function">
    <text evidence="1">Protect the extracellular space from toxic effect of reactive oxygen intermediates by converting superoxide radicals into hydrogen peroxide and oxygen.</text>
</comment>
<comment type="catalytic activity">
    <reaction evidence="8">
        <text>2 superoxide + 2 H(+) = H2O2 + O2</text>
        <dbReference type="Rhea" id="RHEA:20696"/>
        <dbReference type="ChEBI" id="CHEBI:15378"/>
        <dbReference type="ChEBI" id="CHEBI:15379"/>
        <dbReference type="ChEBI" id="CHEBI:16240"/>
        <dbReference type="ChEBI" id="CHEBI:18421"/>
        <dbReference type="EC" id="1.15.1.1"/>
    </reaction>
</comment>
<comment type="cofactor">
    <cofactor evidence="1">
        <name>Cu cation</name>
        <dbReference type="ChEBI" id="CHEBI:23378"/>
    </cofactor>
    <text evidence="1">Binds 1 copper ion per subunit.</text>
</comment>
<comment type="cofactor">
    <cofactor evidence="1">
        <name>Zn(2+)</name>
        <dbReference type="ChEBI" id="CHEBI:29105"/>
    </cofactor>
    <text evidence="1">Binds 1 zinc ion per subunit.</text>
</comment>
<comment type="subunit">
    <text evidence="2">Homotetramer (By similarity). Directly interacts with ATP7A/MNK; this interaction is copper-dependent and is required for SOD3 activity (By similarity).</text>
</comment>
<comment type="subcellular location">
    <subcellularLocation>
        <location>Secreted</location>
        <location>Extracellular space</location>
    </subcellularLocation>
    <subcellularLocation>
        <location evidence="5">Golgi apparatus</location>
        <location evidence="5">trans-Golgi network</location>
    </subcellularLocation>
</comment>
<comment type="similarity">
    <text evidence="7">Belongs to the Cu-Zn superoxide dismutase family.</text>
</comment>
<organism>
    <name type="scientific">Mus musculus</name>
    <name type="common">Mouse</name>
    <dbReference type="NCBI Taxonomy" id="10090"/>
    <lineage>
        <taxon>Eukaryota</taxon>
        <taxon>Metazoa</taxon>
        <taxon>Chordata</taxon>
        <taxon>Craniata</taxon>
        <taxon>Vertebrata</taxon>
        <taxon>Euteleostomi</taxon>
        <taxon>Mammalia</taxon>
        <taxon>Eutheria</taxon>
        <taxon>Euarchontoglires</taxon>
        <taxon>Glires</taxon>
        <taxon>Rodentia</taxon>
        <taxon>Myomorpha</taxon>
        <taxon>Muroidea</taxon>
        <taxon>Muridae</taxon>
        <taxon>Murinae</taxon>
        <taxon>Mus</taxon>
        <taxon>Mus</taxon>
    </lineage>
</organism>
<protein>
    <recommendedName>
        <fullName>Extracellular superoxide dismutase [Cu-Zn]</fullName>
        <shortName>EC-SOD</shortName>
        <ecNumber evidence="8">1.15.1.1</ecNumber>
    </recommendedName>
</protein>
<evidence type="ECO:0000250" key="1"/>
<evidence type="ECO:0000250" key="2">
    <source>
        <dbReference type="UniProtKB" id="P08294"/>
    </source>
</evidence>
<evidence type="ECO:0000255" key="3"/>
<evidence type="ECO:0000256" key="4">
    <source>
        <dbReference type="SAM" id="MobiDB-lite"/>
    </source>
</evidence>
<evidence type="ECO:0000269" key="5">
    <source>
    </source>
</evidence>
<evidence type="ECO:0000269" key="6">
    <source>
    </source>
</evidence>
<evidence type="ECO:0000305" key="7"/>
<evidence type="ECO:0000305" key="8">
    <source>
    </source>
</evidence>
<sequence length="251" mass="27392">MLAFLFYGLLLAACGSVTMSNPGESSFDLADRLDPVEKIDRLDLVEKIGDTHAKVLEIWMELGRRREVDAAEMHAICRVQPSATLPPDQPQITGLVLFRQLGPGSRLEAYFSLEGFPAEQNASNRAIHVHEFGDLSQGCDSTGPHYNPMEVPHPQHPGDFGNFVVRNGQLWRHRVGLTASLAGPHAILGRSVVVHAGEDDLGKGGNQASLQNGNAGRRLACCVVGTSSSAAWESQTKERKKRRRESECKTT</sequence>
<feature type="signal peptide" evidence="1">
    <location>
        <begin position="1"/>
        <end position="15"/>
    </location>
</feature>
<feature type="propeptide" id="PRO_0000032856" evidence="6">
    <location>
        <begin position="16"/>
        <end position="24"/>
    </location>
</feature>
<feature type="chain" id="PRO_0000032857" description="Extracellular superoxide dismutase [Cu-Zn]">
    <location>
        <begin position="25"/>
        <end position="251"/>
    </location>
</feature>
<feature type="region of interest" description="Disordered" evidence="4">
    <location>
        <begin position="230"/>
        <end position="251"/>
    </location>
</feature>
<feature type="binding site" evidence="1">
    <location>
        <position position="128"/>
    </location>
    <ligand>
        <name>Cu cation</name>
        <dbReference type="ChEBI" id="CHEBI:23378"/>
        <note>catalytic</note>
    </ligand>
</feature>
<feature type="binding site" evidence="1">
    <location>
        <position position="130"/>
    </location>
    <ligand>
        <name>Cu cation</name>
        <dbReference type="ChEBI" id="CHEBI:23378"/>
        <note>catalytic</note>
    </ligand>
</feature>
<feature type="binding site" evidence="1">
    <location>
        <position position="145"/>
    </location>
    <ligand>
        <name>Cu cation</name>
        <dbReference type="ChEBI" id="CHEBI:23378"/>
        <note>catalytic</note>
    </ligand>
</feature>
<feature type="binding site" evidence="1">
    <location>
        <position position="145"/>
    </location>
    <ligand>
        <name>Zn(2+)</name>
        <dbReference type="ChEBI" id="CHEBI:29105"/>
        <note>structural</note>
    </ligand>
</feature>
<feature type="binding site" evidence="1">
    <location>
        <position position="153"/>
    </location>
    <ligand>
        <name>Zn(2+)</name>
        <dbReference type="ChEBI" id="CHEBI:29105"/>
        <note>structural</note>
    </ligand>
</feature>
<feature type="binding site" evidence="1">
    <location>
        <position position="156"/>
    </location>
    <ligand>
        <name>Zn(2+)</name>
        <dbReference type="ChEBI" id="CHEBI:29105"/>
        <note>structural</note>
    </ligand>
</feature>
<feature type="binding site" evidence="1">
    <location>
        <position position="159"/>
    </location>
    <ligand>
        <name>Zn(2+)</name>
        <dbReference type="ChEBI" id="CHEBI:29105"/>
        <note>structural</note>
    </ligand>
</feature>
<feature type="binding site" evidence="1">
    <location>
        <position position="195"/>
    </location>
    <ligand>
        <name>Cu cation</name>
        <dbReference type="ChEBI" id="CHEBI:23378"/>
        <note>catalytic</note>
    </ligand>
</feature>
<feature type="glycosylation site" description="N-linked (GlcNAc...) asparagine" evidence="3">
    <location>
        <position position="121"/>
    </location>
</feature>
<feature type="disulfide bond" evidence="1">
    <location>
        <begin position="77"/>
        <end position="222"/>
    </location>
</feature>
<feature type="disulfide bond" evidence="1">
    <location>
        <begin position="139"/>
        <end position="221"/>
    </location>
</feature>
<gene>
    <name type="primary">Sod3</name>
</gene>
<dbReference type="EC" id="1.15.1.1" evidence="8"/>
<dbReference type="EMBL" id="U38261">
    <property type="protein sequence ID" value="AAB51106.1"/>
    <property type="molecule type" value="mRNA"/>
</dbReference>
<dbReference type="EMBL" id="D50856">
    <property type="protein sequence ID" value="BAA23493.1"/>
    <property type="molecule type" value="mRNA"/>
</dbReference>
<dbReference type="EMBL" id="AF223251">
    <property type="protein sequence ID" value="AAF27932.1"/>
    <property type="molecule type" value="Genomic_DNA"/>
</dbReference>
<dbReference type="CCDS" id="CCDS19283.1"/>
<dbReference type="RefSeq" id="NP_035565.1">
    <property type="nucleotide sequence ID" value="NM_011435.3"/>
</dbReference>
<dbReference type="SMR" id="O09164"/>
<dbReference type="BioGRID" id="203389">
    <property type="interactions" value="2"/>
</dbReference>
<dbReference type="FunCoup" id="O09164">
    <property type="interactions" value="96"/>
</dbReference>
<dbReference type="IntAct" id="O09164">
    <property type="interactions" value="1"/>
</dbReference>
<dbReference type="MINT" id="O09164"/>
<dbReference type="STRING" id="10090.ENSMUSP00000098768"/>
<dbReference type="GlyCosmos" id="O09164">
    <property type="glycosylation" value="1 site, 15 glycans"/>
</dbReference>
<dbReference type="GlyGen" id="O09164">
    <property type="glycosylation" value="1 site, 15 N-linked glycans (1 site)"/>
</dbReference>
<dbReference type="iPTMnet" id="O09164"/>
<dbReference type="PhosphoSitePlus" id="O09164"/>
<dbReference type="SwissPalm" id="O09164"/>
<dbReference type="CPTAC" id="non-CPTAC-3378"/>
<dbReference type="jPOST" id="O09164"/>
<dbReference type="PaxDb" id="10090-ENSMUSP00000098768"/>
<dbReference type="PeptideAtlas" id="O09164"/>
<dbReference type="ProteomicsDB" id="258708"/>
<dbReference type="Antibodypedia" id="3278">
    <property type="antibodies" value="545 antibodies from 36 providers"/>
</dbReference>
<dbReference type="DNASU" id="20657"/>
<dbReference type="Ensembl" id="ENSMUST00000101208.6">
    <property type="protein sequence ID" value="ENSMUSP00000098768.5"/>
    <property type="gene ID" value="ENSMUSG00000072941.6"/>
</dbReference>
<dbReference type="GeneID" id="20657"/>
<dbReference type="KEGG" id="mmu:20657"/>
<dbReference type="UCSC" id="uc008xkl.1">
    <property type="organism name" value="mouse"/>
</dbReference>
<dbReference type="AGR" id="MGI:103181"/>
<dbReference type="CTD" id="6649"/>
<dbReference type="MGI" id="MGI:103181">
    <property type="gene designation" value="Sod3"/>
</dbReference>
<dbReference type="VEuPathDB" id="HostDB:ENSMUSG00000072941"/>
<dbReference type="eggNOG" id="KOG0441">
    <property type="taxonomic scope" value="Eukaryota"/>
</dbReference>
<dbReference type="GeneTree" id="ENSGT00940000162224"/>
<dbReference type="HOGENOM" id="CLU_056632_3_1_1"/>
<dbReference type="InParanoid" id="O09164"/>
<dbReference type="OMA" id="DGSLWKY"/>
<dbReference type="OrthoDB" id="666972at2759"/>
<dbReference type="PhylomeDB" id="O09164"/>
<dbReference type="TreeFam" id="TF105133"/>
<dbReference type="Reactome" id="R-MMU-3299685">
    <property type="pathway name" value="Detoxification of Reactive Oxygen Species"/>
</dbReference>
<dbReference type="BioGRID-ORCS" id="20657">
    <property type="hits" value="1 hit in 76 CRISPR screens"/>
</dbReference>
<dbReference type="ChiTaRS" id="Sod3">
    <property type="organism name" value="mouse"/>
</dbReference>
<dbReference type="PRO" id="PR:O09164"/>
<dbReference type="Proteomes" id="UP000000589">
    <property type="component" value="Chromosome 5"/>
</dbReference>
<dbReference type="RNAct" id="O09164">
    <property type="molecule type" value="protein"/>
</dbReference>
<dbReference type="Bgee" id="ENSMUSG00000072941">
    <property type="expression patterns" value="Expressed in choroid plexus of fourth ventricle and 149 other cell types or tissues"/>
</dbReference>
<dbReference type="ExpressionAtlas" id="O09164">
    <property type="expression patterns" value="baseline and differential"/>
</dbReference>
<dbReference type="GO" id="GO:0005615">
    <property type="term" value="C:extracellular space"/>
    <property type="evidence" value="ECO:0000314"/>
    <property type="project" value="MGI"/>
</dbReference>
<dbReference type="GO" id="GO:0005796">
    <property type="term" value="C:Golgi lumen"/>
    <property type="evidence" value="ECO:0000304"/>
    <property type="project" value="Reactome"/>
</dbReference>
<dbReference type="GO" id="GO:0005507">
    <property type="term" value="F:copper ion binding"/>
    <property type="evidence" value="ECO:0007669"/>
    <property type="project" value="InterPro"/>
</dbReference>
<dbReference type="GO" id="GO:0004784">
    <property type="term" value="F:superoxide dismutase activity"/>
    <property type="evidence" value="ECO:0000314"/>
    <property type="project" value="MGI"/>
</dbReference>
<dbReference type="GO" id="GO:0001666">
    <property type="term" value="P:response to hypoxia"/>
    <property type="evidence" value="ECO:0000315"/>
    <property type="project" value="MGI"/>
</dbReference>
<dbReference type="CDD" id="cd00305">
    <property type="entry name" value="Cu-Zn_Superoxide_Dismutase"/>
    <property type="match status" value="1"/>
</dbReference>
<dbReference type="FunFam" id="2.60.40.200:FF:000008">
    <property type="entry name" value="Superoxide dismutase [Cu-Zn]"/>
    <property type="match status" value="1"/>
</dbReference>
<dbReference type="Gene3D" id="2.60.40.200">
    <property type="entry name" value="Superoxide dismutase, copper/zinc binding domain"/>
    <property type="match status" value="1"/>
</dbReference>
<dbReference type="InterPro" id="IPR036423">
    <property type="entry name" value="SOD-like_Cu/Zn_dom_sf"/>
</dbReference>
<dbReference type="InterPro" id="IPR024134">
    <property type="entry name" value="SOD_Cu/Zn_/chaperone"/>
</dbReference>
<dbReference type="InterPro" id="IPR018152">
    <property type="entry name" value="SOD_Cu/Zn_BS"/>
</dbReference>
<dbReference type="InterPro" id="IPR001424">
    <property type="entry name" value="SOD_Cu_Zn_dom"/>
</dbReference>
<dbReference type="PANTHER" id="PTHR10003">
    <property type="entry name" value="SUPEROXIDE DISMUTASE CU-ZN -RELATED"/>
    <property type="match status" value="1"/>
</dbReference>
<dbReference type="Pfam" id="PF00080">
    <property type="entry name" value="Sod_Cu"/>
    <property type="match status" value="1"/>
</dbReference>
<dbReference type="PRINTS" id="PR00068">
    <property type="entry name" value="CUZNDISMTASE"/>
</dbReference>
<dbReference type="SUPFAM" id="SSF49329">
    <property type="entry name" value="Cu,Zn superoxide dismutase-like"/>
    <property type="match status" value="1"/>
</dbReference>
<dbReference type="PROSITE" id="PS00087">
    <property type="entry name" value="SOD_CU_ZN_1"/>
    <property type="match status" value="1"/>
</dbReference>
<dbReference type="PROSITE" id="PS00332">
    <property type="entry name" value="SOD_CU_ZN_2"/>
    <property type="match status" value="1"/>
</dbReference>
<reference key="1">
    <citation type="journal article" date="1997" name="Am. J. Respir. Cell Mol. Biol.">
        <title>Mouse extracellular superoxide dismutase: primary structure, tissue-specific gene expression, chromosomal localization, and lung in situ hybridization.</title>
        <authorList>
            <person name="Folz R.J."/>
            <person name="Guan J."/>
            <person name="Seldin M.F."/>
            <person name="Oury T.D."/>
            <person name="Enghild J.J."/>
            <person name="Crapo J.D."/>
        </authorList>
    </citation>
    <scope>NUCLEOTIDE SEQUENCE [MRNA]</scope>
    <scope>PROTEIN SEQUENCE OF 25-36</scope>
    <source>
        <strain>C57BL/6 X CBA</strain>
        <tissue>Lung</tissue>
    </source>
</reference>
<reference key="2">
    <citation type="journal article" date="1997" name="Mol. Cells">
        <title>Sequence analysis, tissue expression and chromosomal localization of a mouse secreted superoxide dismutase gene.</title>
        <authorList>
            <person name="Suh J.-G."/>
            <person name="Takai S."/>
            <person name="Yamanishi T."/>
            <person name="Kikuchi T."/>
            <person name="Folz R.J."/>
            <person name="Tanaka K."/>
            <person name="Oh Y.-S."/>
            <person name="Wada K."/>
        </authorList>
    </citation>
    <scope>NUCLEOTIDE SEQUENCE [MRNA]</scope>
    <source>
        <strain>C57BL/6J</strain>
        <tissue>Kidney</tissue>
    </source>
</reference>
<reference key="3">
    <citation type="submission" date="2000-01" db="EMBL/GenBank/DDBJ databases">
        <title>Murine extracellular superoxide dismutase genomic sequence.</title>
        <authorList>
            <person name="Siegfried M.R."/>
            <person name="Schultz D."/>
            <person name="Harrison D.G."/>
            <person name="Fukai T."/>
        </authorList>
    </citation>
    <scope>NUCLEOTIDE SEQUENCE</scope>
    <source>
        <strain>C57BL/6J</strain>
        <tissue>Liver</tissue>
    </source>
</reference>
<reference key="4">
    <citation type="journal article" date="2006" name="FASEB J.">
        <title>Essential role for the Menkes ATPase in activation of extracellular superoxide dismutase: implication for vascular oxidative stress.</title>
        <authorList>
            <person name="Qin Z."/>
            <person name="Itoh S."/>
            <person name="Jeney V."/>
            <person name="Ushio-Fukai M."/>
            <person name="Fukai T."/>
        </authorList>
    </citation>
    <scope>SUBCELLULAR LOCATION</scope>
    <scope>INTERACTION WITH ATP7A</scope>
    <scope>CATALYTIC ACTIVITY</scope>
</reference>
<reference key="5">
    <citation type="journal article" date="2010" name="Cell">
        <title>A tissue-specific atlas of mouse protein phosphorylation and expression.</title>
        <authorList>
            <person name="Huttlin E.L."/>
            <person name="Jedrychowski M.P."/>
            <person name="Elias J.E."/>
            <person name="Goswami T."/>
            <person name="Rad R."/>
            <person name="Beausoleil S.A."/>
            <person name="Villen J."/>
            <person name="Haas W."/>
            <person name="Sowa M.E."/>
            <person name="Gygi S.P."/>
        </authorList>
    </citation>
    <scope>IDENTIFICATION BY MASS SPECTROMETRY [LARGE SCALE ANALYSIS]</scope>
    <source>
        <tissue>Brown adipose tissue</tissue>
        <tissue>Heart</tissue>
        <tissue>Kidney</tissue>
        <tissue>Lung</tissue>
        <tissue>Spleen</tissue>
        <tissue>Testis</tissue>
    </source>
</reference>
<keyword id="KW-0049">Antioxidant</keyword>
<keyword id="KW-0186">Copper</keyword>
<keyword id="KW-0903">Direct protein sequencing</keyword>
<keyword id="KW-1015">Disulfide bond</keyword>
<keyword id="KW-0325">Glycoprotein</keyword>
<keyword id="KW-0333">Golgi apparatus</keyword>
<keyword id="KW-0479">Metal-binding</keyword>
<keyword id="KW-0560">Oxidoreductase</keyword>
<keyword id="KW-1185">Reference proteome</keyword>
<keyword id="KW-0964">Secreted</keyword>
<keyword id="KW-0732">Signal</keyword>
<keyword id="KW-0862">Zinc</keyword>
<accession>O09164</accession>
<proteinExistence type="evidence at protein level"/>
<name>SODE_MOUSE</name>